<evidence type="ECO:0000250" key="1">
    <source>
        <dbReference type="UniProtKB" id="Q80X50"/>
    </source>
</evidence>
<evidence type="ECO:0000255" key="2">
    <source>
        <dbReference type="PROSITE-ProRule" id="PRU00212"/>
    </source>
</evidence>
<evidence type="ECO:0000256" key="3">
    <source>
        <dbReference type="SAM" id="MobiDB-lite"/>
    </source>
</evidence>
<evidence type="ECO:0000269" key="4">
    <source>
    </source>
</evidence>
<evidence type="ECO:0000269" key="5">
    <source>
    </source>
</evidence>
<evidence type="ECO:0000269" key="6">
    <source>
    </source>
</evidence>
<evidence type="ECO:0000269" key="7">
    <source>
    </source>
</evidence>
<evidence type="ECO:0000269" key="8">
    <source>
    </source>
</evidence>
<evidence type="ECO:0000269" key="9">
    <source>
    </source>
</evidence>
<evidence type="ECO:0000303" key="10">
    <source>
    </source>
</evidence>
<evidence type="ECO:0000303" key="11">
    <source>
    </source>
</evidence>
<evidence type="ECO:0000303" key="12">
    <source>
    </source>
</evidence>
<evidence type="ECO:0000303" key="13">
    <source>
    </source>
</evidence>
<evidence type="ECO:0000305" key="14"/>
<evidence type="ECO:0000305" key="15">
    <source>
    </source>
</evidence>
<evidence type="ECO:0000312" key="16">
    <source>
        <dbReference type="HGNC" id="HGNC:29877"/>
    </source>
</evidence>
<evidence type="ECO:0007744" key="17">
    <source>
    </source>
</evidence>
<evidence type="ECO:0007744" key="18">
    <source>
    </source>
</evidence>
<evidence type="ECO:0007744" key="19">
    <source>
    </source>
</evidence>
<evidence type="ECO:0007744" key="20">
    <source>
    </source>
</evidence>
<evidence type="ECO:0007744" key="21">
    <source>
    </source>
</evidence>
<evidence type="ECO:0007744" key="22">
    <source>
    </source>
</evidence>
<evidence type="ECO:0007744" key="23">
    <source>
    </source>
</evidence>
<evidence type="ECO:0007744" key="24">
    <source>
    </source>
</evidence>
<evidence type="ECO:0007744" key="25">
    <source>
    </source>
</evidence>
<evidence type="ECO:0007744" key="26">
    <source>
    </source>
</evidence>
<evidence type="ECO:0007744" key="27">
    <source>
    </source>
</evidence>
<evidence type="ECO:0007744" key="28">
    <source>
    </source>
</evidence>
<evidence type="ECO:0007744" key="29">
    <source>
    </source>
</evidence>
<evidence type="ECO:0007744" key="30">
    <source>
    </source>
</evidence>
<evidence type="ECO:0007744" key="31">
    <source>
    </source>
</evidence>
<keyword id="KW-0007">Acetylation</keyword>
<keyword id="KW-0025">Alternative splicing</keyword>
<keyword id="KW-0158">Chromosome</keyword>
<keyword id="KW-0963">Cytoplasm</keyword>
<keyword id="KW-0225">Disease variant</keyword>
<keyword id="KW-0991">Intellectual disability</keyword>
<keyword id="KW-0488">Methylation</keyword>
<keyword id="KW-0539">Nucleus</keyword>
<keyword id="KW-0597">Phosphoprotein</keyword>
<keyword id="KW-1267">Proteomics identification</keyword>
<keyword id="KW-1185">Reference proteome</keyword>
<proteinExistence type="evidence at protein level"/>
<comment type="function">
    <text evidence="1 6 8">Recruits the ubiquitination machinery to RNA polymerase II for polyubiquitination, removal and degradation, when the transcription-coupled nucleotide excision repair (TC-NER) machinery fails to resolve DNA damage (PubMed:35633597). Plays an important role in the activity of long-term repopulating hematopoietic stem cells (LT-HSCs) (By similarity). Is a regulator of stress granule assembly, required for their efficient formation (PubMed:29395067, PubMed:35977029). Required for proper brain development and neocortex lamination (By similarity).</text>
</comment>
<comment type="subunit">
    <text evidence="5 7">Interacts with BMI1 (PubMed:25185265). Part of a complex consisting of UBAP2L, BMI1 and RNF2 (PubMed:25185265). Interacts with G3BP1 (via NTF2 domain); promoting stress granule formation (PubMed:32302570).</text>
</comment>
<comment type="interaction">
    <interactant intactId="EBI-347762">
        <id>Q14157</id>
    </interactant>
    <interactant intactId="EBI-11022345">
        <id>P51114-2</id>
        <label>FXR1</label>
    </interactant>
    <organismsDiffer>false</organismsDiffer>
    <experiments>3</experiments>
</comment>
<comment type="interaction">
    <interactant intactId="EBI-347762">
        <id>Q14157</id>
    </interactant>
    <interactant intactId="EBI-740459">
        <id>P51116</id>
        <label>FXR2</label>
    </interactant>
    <organismsDiffer>false</organismsDiffer>
    <experiments>5</experiments>
</comment>
<comment type="interaction">
    <interactant intactId="EBI-347762">
        <id>Q14157</id>
    </interactant>
    <interactant intactId="EBI-1047359">
        <id>Q13283</id>
        <label>G3BP1</label>
    </interactant>
    <organismsDiffer>false</organismsDiffer>
    <experiments>3</experiments>
</comment>
<comment type="interaction">
    <interactant intactId="EBI-347762">
        <id>Q14157</id>
    </interactant>
    <interactant intactId="EBI-25475885">
        <id>PRO_0000449629</id>
        <label>rep</label>
        <dbReference type="UniProtKB" id="P0DTD1"/>
    </interactant>
    <organismsDiffer>true</organismsDiffer>
    <experiments>3</experiments>
</comment>
<comment type="subcellular location">
    <subcellularLocation>
        <location evidence="8">Nucleus</location>
    </subcellularLocation>
    <subcellularLocation>
        <location evidence="8">Chromosome</location>
    </subcellularLocation>
    <subcellularLocation>
        <location evidence="8">Cytoplasm</location>
    </subcellularLocation>
    <subcellularLocation>
        <location evidence="15">Cytoplasm</location>
        <location evidence="15">Stress granule</location>
    </subcellularLocation>
    <text evidence="8">Associates with nuclear chromatin.</text>
</comment>
<comment type="alternative products">
    <event type="alternative splicing"/>
    <isoform>
        <id>Q14157-2</id>
        <name>1</name>
        <sequence type="displayed"/>
    </isoform>
    <isoform>
        <id>Q14157-1</id>
        <name>2</name>
        <sequence type="described" ref="VSP_019417"/>
    </isoform>
    <isoform>
        <id>Q14157-3</id>
        <name>3</name>
        <sequence type="described" ref="VSP_021728"/>
    </isoform>
    <isoform>
        <id>Q14157-4</id>
        <name>4</name>
        <sequence type="described" ref="VSP_038235 VSP_019417"/>
    </isoform>
    <isoform>
        <id>Q14157-5</id>
        <name>5</name>
        <sequence type="described" ref="VSP_042167"/>
    </isoform>
</comment>
<comment type="tissue specificity">
    <text evidence="4">Ubiquitous.</text>
</comment>
<comment type="PTM">
    <text>Acetylated.</text>
</comment>
<comment type="disease" evidence="9">
    <disease id="DI-06736">
        <name>Neurodevelopmental disorder with impaired language, behavioral abnormalities, and dysmorphic facies</name>
        <acronym>NEDLBF</acronym>
        <description>A disorder characterized by global developmental delay, speech delay, variably impaired intellectual development, behavioral abnormalities, and dysmorphic facial features. Additional features include early feeding difficulties, failure to thrive, short stature, mild visual impairment, hypotonia, seizures, and distal skeletal defects of the hands and feet.</description>
        <dbReference type="MIM" id="620494"/>
    </disease>
    <text>The disease is caused by variants affecting the gene represented in this entry.</text>
</comment>
<comment type="sequence caution" evidence="14">
    <conflict type="frameshift">
        <sequence resource="EMBL-CDS" id="CAB65100"/>
    </conflict>
</comment>
<reference key="1">
    <citation type="journal article" date="1995" name="DNA Res.">
        <title>Prediction of the coding sequences of unidentified human genes. IV. The coding sequences of 40 new genes (KIAA0121-KIAA0160) deduced by analysis of cDNA clones from human cell line KG-1.</title>
        <authorList>
            <person name="Nagase T."/>
            <person name="Seki N."/>
            <person name="Tanaka A."/>
            <person name="Ishikawa K."/>
            <person name="Nomura N."/>
        </authorList>
    </citation>
    <scope>NUCLEOTIDE SEQUENCE [LARGE SCALE MRNA] (ISOFORM 2)</scope>
    <source>
        <tissue>Bone marrow</tissue>
    </source>
</reference>
<reference key="2">
    <citation type="journal article" date="2004" name="Nat. Genet.">
        <title>Complete sequencing and characterization of 21,243 full-length human cDNAs.</title>
        <authorList>
            <person name="Ota T."/>
            <person name="Suzuki Y."/>
            <person name="Nishikawa T."/>
            <person name="Otsuki T."/>
            <person name="Sugiyama T."/>
            <person name="Irie R."/>
            <person name="Wakamatsu A."/>
            <person name="Hayashi K."/>
            <person name="Sato H."/>
            <person name="Nagai K."/>
            <person name="Kimura K."/>
            <person name="Makita H."/>
            <person name="Sekine M."/>
            <person name="Obayashi M."/>
            <person name="Nishi T."/>
            <person name="Shibahara T."/>
            <person name="Tanaka T."/>
            <person name="Ishii S."/>
            <person name="Yamamoto J."/>
            <person name="Saito K."/>
            <person name="Kawai Y."/>
            <person name="Isono Y."/>
            <person name="Nakamura Y."/>
            <person name="Nagahari K."/>
            <person name="Murakami K."/>
            <person name="Yasuda T."/>
            <person name="Iwayanagi T."/>
            <person name="Wagatsuma M."/>
            <person name="Shiratori A."/>
            <person name="Sudo H."/>
            <person name="Hosoiri T."/>
            <person name="Kaku Y."/>
            <person name="Kodaira H."/>
            <person name="Kondo H."/>
            <person name="Sugawara M."/>
            <person name="Takahashi M."/>
            <person name="Kanda K."/>
            <person name="Yokoi T."/>
            <person name="Furuya T."/>
            <person name="Kikkawa E."/>
            <person name="Omura Y."/>
            <person name="Abe K."/>
            <person name="Kamihara K."/>
            <person name="Katsuta N."/>
            <person name="Sato K."/>
            <person name="Tanikawa M."/>
            <person name="Yamazaki M."/>
            <person name="Ninomiya K."/>
            <person name="Ishibashi T."/>
            <person name="Yamashita H."/>
            <person name="Murakawa K."/>
            <person name="Fujimori K."/>
            <person name="Tanai H."/>
            <person name="Kimata M."/>
            <person name="Watanabe M."/>
            <person name="Hiraoka S."/>
            <person name="Chiba Y."/>
            <person name="Ishida S."/>
            <person name="Ono Y."/>
            <person name="Takiguchi S."/>
            <person name="Watanabe S."/>
            <person name="Yosida M."/>
            <person name="Hotuta T."/>
            <person name="Kusano J."/>
            <person name="Kanehori K."/>
            <person name="Takahashi-Fujii A."/>
            <person name="Hara H."/>
            <person name="Tanase T.-O."/>
            <person name="Nomura Y."/>
            <person name="Togiya S."/>
            <person name="Komai F."/>
            <person name="Hara R."/>
            <person name="Takeuchi K."/>
            <person name="Arita M."/>
            <person name="Imose N."/>
            <person name="Musashino K."/>
            <person name="Yuuki H."/>
            <person name="Oshima A."/>
            <person name="Sasaki N."/>
            <person name="Aotsuka S."/>
            <person name="Yoshikawa Y."/>
            <person name="Matsunawa H."/>
            <person name="Ichihara T."/>
            <person name="Shiohata N."/>
            <person name="Sano S."/>
            <person name="Moriya S."/>
            <person name="Momiyama H."/>
            <person name="Satoh N."/>
            <person name="Takami S."/>
            <person name="Terashima Y."/>
            <person name="Suzuki O."/>
            <person name="Nakagawa S."/>
            <person name="Senoh A."/>
            <person name="Mizoguchi H."/>
            <person name="Goto Y."/>
            <person name="Shimizu F."/>
            <person name="Wakebe H."/>
            <person name="Hishigaki H."/>
            <person name="Watanabe T."/>
            <person name="Sugiyama A."/>
            <person name="Takemoto M."/>
            <person name="Kawakami B."/>
            <person name="Yamazaki M."/>
            <person name="Watanabe K."/>
            <person name="Kumagai A."/>
            <person name="Itakura S."/>
            <person name="Fukuzumi Y."/>
            <person name="Fujimori Y."/>
            <person name="Komiyama M."/>
            <person name="Tashiro H."/>
            <person name="Tanigami A."/>
            <person name="Fujiwara T."/>
            <person name="Ono T."/>
            <person name="Yamada K."/>
            <person name="Fujii Y."/>
            <person name="Ozaki K."/>
            <person name="Hirao M."/>
            <person name="Ohmori Y."/>
            <person name="Kawabata A."/>
            <person name="Hikiji T."/>
            <person name="Kobatake N."/>
            <person name="Inagaki H."/>
            <person name="Ikema Y."/>
            <person name="Okamoto S."/>
            <person name="Okitani R."/>
            <person name="Kawakami T."/>
            <person name="Noguchi S."/>
            <person name="Itoh T."/>
            <person name="Shigeta K."/>
            <person name="Senba T."/>
            <person name="Matsumura K."/>
            <person name="Nakajima Y."/>
            <person name="Mizuno T."/>
            <person name="Morinaga M."/>
            <person name="Sasaki M."/>
            <person name="Togashi T."/>
            <person name="Oyama M."/>
            <person name="Hata H."/>
            <person name="Watanabe M."/>
            <person name="Komatsu T."/>
            <person name="Mizushima-Sugano J."/>
            <person name="Satoh T."/>
            <person name="Shirai Y."/>
            <person name="Takahashi Y."/>
            <person name="Nakagawa K."/>
            <person name="Okumura K."/>
            <person name="Nagase T."/>
            <person name="Nomura N."/>
            <person name="Kikuchi H."/>
            <person name="Masuho Y."/>
            <person name="Yamashita R."/>
            <person name="Nakai K."/>
            <person name="Yada T."/>
            <person name="Nakamura Y."/>
            <person name="Ohara O."/>
            <person name="Isogai T."/>
            <person name="Sugano S."/>
        </authorList>
    </citation>
    <scope>NUCLEOTIDE SEQUENCE [LARGE SCALE MRNA] (ISOFORM 4)</scope>
    <source>
        <tissue>Thymus</tissue>
    </source>
</reference>
<reference key="3">
    <citation type="journal article" date="2006" name="Nature">
        <title>The DNA sequence and biological annotation of human chromosome 1.</title>
        <authorList>
            <person name="Gregory S.G."/>
            <person name="Barlow K.F."/>
            <person name="McLay K.E."/>
            <person name="Kaul R."/>
            <person name="Swarbreck D."/>
            <person name="Dunham A."/>
            <person name="Scott C.E."/>
            <person name="Howe K.L."/>
            <person name="Woodfine K."/>
            <person name="Spencer C.C.A."/>
            <person name="Jones M.C."/>
            <person name="Gillson C."/>
            <person name="Searle S."/>
            <person name="Zhou Y."/>
            <person name="Kokocinski F."/>
            <person name="McDonald L."/>
            <person name="Evans R."/>
            <person name="Phillips K."/>
            <person name="Atkinson A."/>
            <person name="Cooper R."/>
            <person name="Jones C."/>
            <person name="Hall R.E."/>
            <person name="Andrews T.D."/>
            <person name="Lloyd C."/>
            <person name="Ainscough R."/>
            <person name="Almeida J.P."/>
            <person name="Ambrose K.D."/>
            <person name="Anderson F."/>
            <person name="Andrew R.W."/>
            <person name="Ashwell R.I.S."/>
            <person name="Aubin K."/>
            <person name="Babbage A.K."/>
            <person name="Bagguley C.L."/>
            <person name="Bailey J."/>
            <person name="Beasley H."/>
            <person name="Bethel G."/>
            <person name="Bird C.P."/>
            <person name="Bray-Allen S."/>
            <person name="Brown J.Y."/>
            <person name="Brown A.J."/>
            <person name="Buckley D."/>
            <person name="Burton J."/>
            <person name="Bye J."/>
            <person name="Carder C."/>
            <person name="Chapman J.C."/>
            <person name="Clark S.Y."/>
            <person name="Clarke G."/>
            <person name="Clee C."/>
            <person name="Cobley V."/>
            <person name="Collier R.E."/>
            <person name="Corby N."/>
            <person name="Coville G.J."/>
            <person name="Davies J."/>
            <person name="Deadman R."/>
            <person name="Dunn M."/>
            <person name="Earthrowl M."/>
            <person name="Ellington A.G."/>
            <person name="Errington H."/>
            <person name="Frankish A."/>
            <person name="Frankland J."/>
            <person name="French L."/>
            <person name="Garner P."/>
            <person name="Garnett J."/>
            <person name="Gay L."/>
            <person name="Ghori M.R.J."/>
            <person name="Gibson R."/>
            <person name="Gilby L.M."/>
            <person name="Gillett W."/>
            <person name="Glithero R.J."/>
            <person name="Grafham D.V."/>
            <person name="Griffiths C."/>
            <person name="Griffiths-Jones S."/>
            <person name="Grocock R."/>
            <person name="Hammond S."/>
            <person name="Harrison E.S.I."/>
            <person name="Hart E."/>
            <person name="Haugen E."/>
            <person name="Heath P.D."/>
            <person name="Holmes S."/>
            <person name="Holt K."/>
            <person name="Howden P.J."/>
            <person name="Hunt A.R."/>
            <person name="Hunt S.E."/>
            <person name="Hunter G."/>
            <person name="Isherwood J."/>
            <person name="James R."/>
            <person name="Johnson C."/>
            <person name="Johnson D."/>
            <person name="Joy A."/>
            <person name="Kay M."/>
            <person name="Kershaw J.K."/>
            <person name="Kibukawa M."/>
            <person name="Kimberley A.M."/>
            <person name="King A."/>
            <person name="Knights A.J."/>
            <person name="Lad H."/>
            <person name="Laird G."/>
            <person name="Lawlor S."/>
            <person name="Leongamornlert D.A."/>
            <person name="Lloyd D.M."/>
            <person name="Loveland J."/>
            <person name="Lovell J."/>
            <person name="Lush M.J."/>
            <person name="Lyne R."/>
            <person name="Martin S."/>
            <person name="Mashreghi-Mohammadi M."/>
            <person name="Matthews L."/>
            <person name="Matthews N.S.W."/>
            <person name="McLaren S."/>
            <person name="Milne S."/>
            <person name="Mistry S."/>
            <person name="Moore M.J.F."/>
            <person name="Nickerson T."/>
            <person name="O'Dell C.N."/>
            <person name="Oliver K."/>
            <person name="Palmeiri A."/>
            <person name="Palmer S.A."/>
            <person name="Parker A."/>
            <person name="Patel D."/>
            <person name="Pearce A.V."/>
            <person name="Peck A.I."/>
            <person name="Pelan S."/>
            <person name="Phelps K."/>
            <person name="Phillimore B.J."/>
            <person name="Plumb R."/>
            <person name="Rajan J."/>
            <person name="Raymond C."/>
            <person name="Rouse G."/>
            <person name="Saenphimmachak C."/>
            <person name="Sehra H.K."/>
            <person name="Sheridan E."/>
            <person name="Shownkeen R."/>
            <person name="Sims S."/>
            <person name="Skuce C.D."/>
            <person name="Smith M."/>
            <person name="Steward C."/>
            <person name="Subramanian S."/>
            <person name="Sycamore N."/>
            <person name="Tracey A."/>
            <person name="Tromans A."/>
            <person name="Van Helmond Z."/>
            <person name="Wall M."/>
            <person name="Wallis J.M."/>
            <person name="White S."/>
            <person name="Whitehead S.L."/>
            <person name="Wilkinson J.E."/>
            <person name="Willey D.L."/>
            <person name="Williams H."/>
            <person name="Wilming L."/>
            <person name="Wray P.W."/>
            <person name="Wu Z."/>
            <person name="Coulson A."/>
            <person name="Vaudin M."/>
            <person name="Sulston J.E."/>
            <person name="Durbin R.M."/>
            <person name="Hubbard T."/>
            <person name="Wooster R."/>
            <person name="Dunham I."/>
            <person name="Carter N.P."/>
            <person name="McVean G."/>
            <person name="Ross M.T."/>
            <person name="Harrow J."/>
            <person name="Olson M.V."/>
            <person name="Beck S."/>
            <person name="Rogers J."/>
            <person name="Bentley D.R."/>
        </authorList>
    </citation>
    <scope>NUCLEOTIDE SEQUENCE [LARGE SCALE GENOMIC DNA]</scope>
</reference>
<reference key="4">
    <citation type="journal article" date="2004" name="Genome Res.">
        <title>The status, quality, and expansion of the NIH full-length cDNA project: the Mammalian Gene Collection (MGC).</title>
        <authorList>
            <consortium name="The MGC Project Team"/>
        </authorList>
    </citation>
    <scope>NUCLEOTIDE SEQUENCE [LARGE SCALE MRNA] (ISOFORM 1)</scope>
    <source>
        <tissue>Skin</tissue>
    </source>
</reference>
<reference key="5">
    <citation type="journal article" date="2001" name="Genome Res.">
        <title>Identification of human epidermal differentiation complex (EDC)-encoded genes by subtractive hybridization of entire YACs to a gridded keratinocyte cDNA library.</title>
        <authorList>
            <person name="Marenholz I."/>
            <person name="Zirra M."/>
            <person name="Fischer D.F."/>
            <person name="Backendorf C."/>
            <person name="Ziegler A."/>
            <person name="Mischke D."/>
        </authorList>
    </citation>
    <scope>NUCLEOTIDE SEQUENCE [MRNA] OF 1-137 (ISOFORMS 1/2/3)</scope>
    <scope>NUCLEOTIDE SEQUENCE [MRNA] OF 671-1087 (ISOFORM 3)</scope>
    <scope>NUCLEOTIDE SEQUENCE [MRNA] OF 760-1087 (ISOFORM 5)</scope>
    <scope>TISSUE SPECIFICITY</scope>
    <source>
        <tissue>Keratinocyte</tissue>
    </source>
</reference>
<reference key="6">
    <citation type="journal article" date="2004" name="Anal. Chem.">
        <title>Robust phosphoproteomic profiling of tyrosine phosphorylation sites from human T cells using immobilized metal affinity chromatography and tandem mass spectrometry.</title>
        <authorList>
            <person name="Brill L.M."/>
            <person name="Salomon A.R."/>
            <person name="Ficarro S.B."/>
            <person name="Mukherji M."/>
            <person name="Stettler-Gill M."/>
            <person name="Peters E.C."/>
        </authorList>
    </citation>
    <scope>PHOSPHORYLATION [LARGE SCALE ANALYSIS] AT SER-416</scope>
    <scope>IDENTIFICATION BY MASS SPECTROMETRY [LARGE SCALE ANALYSIS]</scope>
    <source>
        <tissue>Leukemic T-cell</tissue>
    </source>
</reference>
<reference key="7">
    <citation type="journal article" date="2005" name="Nat. Biotechnol.">
        <title>Immunoaffinity profiling of tyrosine phosphorylation in cancer cells.</title>
        <authorList>
            <person name="Rush J."/>
            <person name="Moritz A."/>
            <person name="Lee K.A."/>
            <person name="Guo A."/>
            <person name="Goss V.L."/>
            <person name="Spek E.J."/>
            <person name="Zhang H."/>
            <person name="Zha X.-M."/>
            <person name="Polakiewicz R.D."/>
            <person name="Comb M.J."/>
        </authorList>
    </citation>
    <scope>IDENTIFICATION BY MASS SPECTROMETRY [LARGE SCALE ANALYSIS]</scope>
</reference>
<reference key="8">
    <citation type="journal article" date="2006" name="Cell">
        <title>Global, in vivo, and site-specific phosphorylation dynamics in signaling networks.</title>
        <authorList>
            <person name="Olsen J.V."/>
            <person name="Blagoev B."/>
            <person name="Gnad F."/>
            <person name="Macek B."/>
            <person name="Kumar C."/>
            <person name="Mortensen P."/>
            <person name="Mann M."/>
        </authorList>
    </citation>
    <scope>IDENTIFICATION BY MASS SPECTROMETRY [LARGE SCALE ANALYSIS]</scope>
    <source>
        <tissue>Cervix carcinoma</tissue>
    </source>
</reference>
<reference key="9">
    <citation type="journal article" date="2006" name="Nat. Biotechnol.">
        <title>A probability-based approach for high-throughput protein phosphorylation analysis and site localization.</title>
        <authorList>
            <person name="Beausoleil S.A."/>
            <person name="Villen J."/>
            <person name="Gerber S.A."/>
            <person name="Rush J."/>
            <person name="Gygi S.P."/>
        </authorList>
    </citation>
    <scope>PHOSPHORYLATION [LARGE SCALE ANALYSIS] AT SER-454</scope>
    <scope>IDENTIFICATION BY MASS SPECTROMETRY [LARGE SCALE ANALYSIS]</scope>
    <source>
        <tissue>Cervix carcinoma</tissue>
    </source>
</reference>
<reference key="10">
    <citation type="journal article" date="2007" name="J. Proteome Res.">
        <title>Improved titanium dioxide enrichment of phosphopeptides from HeLa cells and high confident phosphopeptide identification by cross-validation of MS/MS and MS/MS/MS spectra.</title>
        <authorList>
            <person name="Yu L.R."/>
            <person name="Zhu Z."/>
            <person name="Chan K.C."/>
            <person name="Issaq H.J."/>
            <person name="Dimitrov D.S."/>
            <person name="Veenstra T.D."/>
        </authorList>
    </citation>
    <scope>PHOSPHORYLATION [LARGE SCALE ANALYSIS] AT SER-416</scope>
    <scope>IDENTIFICATION BY MASS SPECTROMETRY [LARGE SCALE ANALYSIS]</scope>
    <source>
        <tissue>Cervix carcinoma</tissue>
    </source>
</reference>
<reference key="11">
    <citation type="journal article" date="2007" name="Science">
        <title>ATM and ATR substrate analysis reveals extensive protein networks responsive to DNA damage.</title>
        <authorList>
            <person name="Matsuoka S."/>
            <person name="Ballif B.A."/>
            <person name="Smogorzewska A."/>
            <person name="McDonald E.R. III"/>
            <person name="Hurov K.E."/>
            <person name="Luo J."/>
            <person name="Bakalarski C.E."/>
            <person name="Zhao Z."/>
            <person name="Solimini N."/>
            <person name="Lerenthal Y."/>
            <person name="Shiloh Y."/>
            <person name="Gygi S.P."/>
            <person name="Elledge S.J."/>
        </authorList>
    </citation>
    <scope>IDENTIFICATION BY MASS SPECTROMETRY [LARGE SCALE ANALYSIS]</scope>
    <source>
        <tissue>Embryonic kidney</tissue>
    </source>
</reference>
<reference key="12">
    <citation type="journal article" date="2008" name="Mol. Cell">
        <title>Kinase-selective enrichment enables quantitative phosphoproteomics of the kinome across the cell cycle.</title>
        <authorList>
            <person name="Daub H."/>
            <person name="Olsen J.V."/>
            <person name="Bairlein M."/>
            <person name="Gnad F."/>
            <person name="Oppermann F.S."/>
            <person name="Korner R."/>
            <person name="Greff Z."/>
            <person name="Keri G."/>
            <person name="Stemmann O."/>
            <person name="Mann M."/>
        </authorList>
    </citation>
    <scope>PHOSPHORYLATION [LARGE SCALE ANALYSIS] AT SER-416; SER-439 AND SER-467</scope>
    <scope>IDENTIFICATION BY MASS SPECTROMETRY [LARGE SCALE ANALYSIS]</scope>
    <source>
        <tissue>Cervix carcinoma</tissue>
    </source>
</reference>
<reference key="13">
    <citation type="journal article" date="2008" name="Proc. Natl. Acad. Sci. U.S.A.">
        <title>A quantitative atlas of mitotic phosphorylation.</title>
        <authorList>
            <person name="Dephoure N."/>
            <person name="Zhou C."/>
            <person name="Villen J."/>
            <person name="Beausoleil S.A."/>
            <person name="Bakalarski C.E."/>
            <person name="Elledge S.J."/>
            <person name="Gygi S.P."/>
        </authorList>
    </citation>
    <scope>PHOSPHORYLATION [LARGE SCALE ANALYSIS] AT SER-416; SER-439; SER-454; SER-467; SER-471; SER-477; SER-605; SER-608; SER-609; SER-852 AND SER-859</scope>
    <scope>IDENTIFICATION BY MASS SPECTROMETRY [LARGE SCALE ANALYSIS]</scope>
    <source>
        <tissue>Cervix carcinoma</tissue>
    </source>
</reference>
<reference key="14">
    <citation type="journal article" date="2009" name="Anal. Chem.">
        <title>Lys-N and trypsin cover complementary parts of the phosphoproteome in a refined SCX-based approach.</title>
        <authorList>
            <person name="Gauci S."/>
            <person name="Helbig A.O."/>
            <person name="Slijper M."/>
            <person name="Krijgsveld J."/>
            <person name="Heck A.J."/>
            <person name="Mohammed S."/>
        </authorList>
    </citation>
    <scope>ACETYLATION [LARGE SCALE ANALYSIS] AT MET-1</scope>
    <scope>IDENTIFICATION BY MASS SPECTROMETRY [LARGE SCALE ANALYSIS]</scope>
</reference>
<reference key="15">
    <citation type="journal article" date="2009" name="Mol. Cell. Proteomics">
        <title>Large-scale proteomics analysis of the human kinome.</title>
        <authorList>
            <person name="Oppermann F.S."/>
            <person name="Gnad F."/>
            <person name="Olsen J.V."/>
            <person name="Hornberger R."/>
            <person name="Greff Z."/>
            <person name="Keri G."/>
            <person name="Mann M."/>
            <person name="Daub H."/>
        </authorList>
    </citation>
    <scope>PHOSPHORYLATION [LARGE SCALE ANALYSIS] AT SER-467</scope>
    <scope>IDENTIFICATION BY MASS SPECTROMETRY [LARGE SCALE ANALYSIS]</scope>
</reference>
<reference key="16">
    <citation type="journal article" date="2009" name="Sci. Signal.">
        <title>Quantitative phosphoproteomic analysis of T cell receptor signaling reveals system-wide modulation of protein-protein interactions.</title>
        <authorList>
            <person name="Mayya V."/>
            <person name="Lundgren D.H."/>
            <person name="Hwang S.-I."/>
            <person name="Rezaul K."/>
            <person name="Wu L."/>
            <person name="Eng J.K."/>
            <person name="Rodionov V."/>
            <person name="Han D.K."/>
        </authorList>
    </citation>
    <scope>PHOSPHORYLATION [LARGE SCALE ANALYSIS] AT SER-454; SER-470; SER-477 AND SER-859</scope>
    <scope>IDENTIFICATION BY MASS SPECTROMETRY [LARGE SCALE ANALYSIS]</scope>
    <source>
        <tissue>Leukemic T-cell</tissue>
    </source>
</reference>
<reference key="17">
    <citation type="journal article" date="2009" name="Science">
        <title>Lysine acetylation targets protein complexes and co-regulates major cellular functions.</title>
        <authorList>
            <person name="Choudhary C."/>
            <person name="Kumar C."/>
            <person name="Gnad F."/>
            <person name="Nielsen M.L."/>
            <person name="Rehman M."/>
            <person name="Walther T.C."/>
            <person name="Olsen J.V."/>
            <person name="Mann M."/>
        </authorList>
    </citation>
    <scope>ACETYLATION [LARGE SCALE ANALYSIS] AT LYS-976 (ISOFORM 2)</scope>
    <scope>ACETYLATION [LARGE SCALE ANALYSIS] AT LYS-969 (ISOFORM 4)</scope>
    <scope>IDENTIFICATION BY MASS SPECTROMETRY [LARGE SCALE ANALYSIS]</scope>
</reference>
<reference key="18">
    <citation type="journal article" date="2010" name="Sci. Signal.">
        <title>Quantitative phosphoproteomics reveals widespread full phosphorylation site occupancy during mitosis.</title>
        <authorList>
            <person name="Olsen J.V."/>
            <person name="Vermeulen M."/>
            <person name="Santamaria A."/>
            <person name="Kumar C."/>
            <person name="Miller M.L."/>
            <person name="Jensen L.J."/>
            <person name="Gnad F."/>
            <person name="Cox J."/>
            <person name="Jensen T.S."/>
            <person name="Nigg E.A."/>
            <person name="Brunak S."/>
            <person name="Mann M."/>
        </authorList>
    </citation>
    <scope>PHOSPHORYLATION [LARGE SCALE ANALYSIS] AT SER-416; THR-425; SER-439; SER-454 AND SER-609</scope>
    <scope>IDENTIFICATION BY MASS SPECTROMETRY [LARGE SCALE ANALYSIS]</scope>
    <source>
        <tissue>Cervix carcinoma</tissue>
    </source>
</reference>
<reference key="19">
    <citation type="journal article" date="2011" name="BMC Syst. Biol.">
        <title>Initial characterization of the human central proteome.</title>
        <authorList>
            <person name="Burkard T.R."/>
            <person name="Planyavsky M."/>
            <person name="Kaupe I."/>
            <person name="Breitwieser F.P."/>
            <person name="Buerckstuemmer T."/>
            <person name="Bennett K.L."/>
            <person name="Superti-Furga G."/>
            <person name="Colinge J."/>
        </authorList>
    </citation>
    <scope>IDENTIFICATION BY MASS SPECTROMETRY [LARGE SCALE ANALYSIS]</scope>
</reference>
<reference key="20">
    <citation type="journal article" date="2011" name="Sci. Signal.">
        <title>System-wide temporal characterization of the proteome and phosphoproteome of human embryonic stem cell differentiation.</title>
        <authorList>
            <person name="Rigbolt K.T."/>
            <person name="Prokhorova T.A."/>
            <person name="Akimov V."/>
            <person name="Henningsen J."/>
            <person name="Johansen P.T."/>
            <person name="Kratchmarova I."/>
            <person name="Kassem M."/>
            <person name="Mann M."/>
            <person name="Olsen J.V."/>
            <person name="Blagoev B."/>
        </authorList>
    </citation>
    <scope>PHOSPHORYLATION [LARGE SCALE ANALYSIS] AT SER-416; SER-467; SER-477 AND SER-609</scope>
    <scope>IDENTIFICATION BY MASS SPECTROMETRY [LARGE SCALE ANALYSIS]</scope>
</reference>
<reference key="21">
    <citation type="journal article" date="2012" name="Proc. Natl. Acad. Sci. U.S.A.">
        <title>N-terminal acetylome analyses and functional insights of the N-terminal acetyltransferase NatB.</title>
        <authorList>
            <person name="Van Damme P."/>
            <person name="Lasa M."/>
            <person name="Polevoda B."/>
            <person name="Gazquez C."/>
            <person name="Elosegui-Artola A."/>
            <person name="Kim D.S."/>
            <person name="De Juan-Pardo E."/>
            <person name="Demeyer K."/>
            <person name="Hole K."/>
            <person name="Larrea E."/>
            <person name="Timmerman E."/>
            <person name="Prieto J."/>
            <person name="Arnesen T."/>
            <person name="Sherman F."/>
            <person name="Gevaert K."/>
            <person name="Aldabe R."/>
        </authorList>
    </citation>
    <scope>ACETYLATION [LARGE SCALE ANALYSIS] AT MET-1</scope>
    <scope>IDENTIFICATION BY MASS SPECTROMETRY [LARGE SCALE ANALYSIS]</scope>
</reference>
<reference key="22">
    <citation type="journal article" date="2013" name="J. Proteome Res.">
        <title>Toward a comprehensive characterization of a human cancer cell phosphoproteome.</title>
        <authorList>
            <person name="Zhou H."/>
            <person name="Di Palma S."/>
            <person name="Preisinger C."/>
            <person name="Peng M."/>
            <person name="Polat A.N."/>
            <person name="Heck A.J."/>
            <person name="Mohammed S."/>
        </authorList>
    </citation>
    <scope>PHOSPHORYLATION [LARGE SCALE ANALYSIS] AT SER-356; SER-360; SER-410; SER-416; SER-454; SER-477; SER-604; SER-605; SER-608; SER-609; SER-852 AND SER-859</scope>
    <scope>IDENTIFICATION BY MASS SPECTROMETRY [LARGE SCALE ANALYSIS]</scope>
    <source>
        <tissue>Cervix carcinoma</tissue>
        <tissue>Erythroleukemia</tissue>
    </source>
</reference>
<reference key="23">
    <citation type="journal article" date="2014" name="Blood">
        <title>UBAP2L is a novel BMI1-interacting protein essential for hematopoietic stem cell activity.</title>
        <authorList>
            <person name="Bordeleau M.E."/>
            <person name="Aucagne R."/>
            <person name="Chagraoui J."/>
            <person name="Girard S."/>
            <person name="Mayotte N."/>
            <person name="Bonneil E."/>
            <person name="Thibault P."/>
            <person name="Pabst C."/>
            <person name="Bergeron A."/>
            <person name="Barabe F."/>
            <person name="Hebert J."/>
            <person name="Sauvageau M."/>
            <person name="Boutonnet C."/>
            <person name="Meloche S."/>
            <person name="Sauvageau G."/>
        </authorList>
    </citation>
    <scope>INTERACTION WITH BMI1</scope>
    <scope>IDENTIFICATION IN THE COMPLEX WITH BMI1 AND RNF2</scope>
</reference>
<reference key="24">
    <citation type="journal article" date="2014" name="J. Proteomics">
        <title>An enzyme assisted RP-RPLC approach for in-depth analysis of human liver phosphoproteome.</title>
        <authorList>
            <person name="Bian Y."/>
            <person name="Song C."/>
            <person name="Cheng K."/>
            <person name="Dong M."/>
            <person name="Wang F."/>
            <person name="Huang J."/>
            <person name="Sun D."/>
            <person name="Wang L."/>
            <person name="Ye M."/>
            <person name="Zou H."/>
        </authorList>
    </citation>
    <scope>PHOSPHORYLATION [LARGE SCALE ANALYSIS] AT SER-609</scope>
    <scope>IDENTIFICATION BY MASS SPECTROMETRY [LARGE SCALE ANALYSIS]</scope>
    <source>
        <tissue>Liver</tissue>
    </source>
</reference>
<reference key="25">
    <citation type="journal article" date="2014" name="Mol. Cell. Proteomics">
        <title>Immunoaffinity enrichment and mass spectrometry analysis of protein methylation.</title>
        <authorList>
            <person name="Guo A."/>
            <person name="Gu H."/>
            <person name="Zhou J."/>
            <person name="Mulhern D."/>
            <person name="Wang Y."/>
            <person name="Lee K.A."/>
            <person name="Yang V."/>
            <person name="Aguiar M."/>
            <person name="Kornhauser J."/>
            <person name="Jia X."/>
            <person name="Ren J."/>
            <person name="Beausoleil S.A."/>
            <person name="Silva J.C."/>
            <person name="Vemulapalli V."/>
            <person name="Bedford M.T."/>
            <person name="Comb M.J."/>
        </authorList>
    </citation>
    <scope>METHYLATION [LARGE SCALE ANALYSIS] AT ARG-187 AND ARG-190</scope>
    <scope>METHYLATION [LARGE SCALE ANALYSIS] AT ARG-969 (ISOFORM 2)</scope>
    <scope>METHYLATION [LARGE SCALE ANALYSIS] AT ARG-962 (ISOFORM 4)</scope>
    <scope>IDENTIFICATION BY MASS SPECTROMETRY [LARGE SCALE ANALYSIS]</scope>
    <source>
        <tissue>Colon carcinoma</tissue>
    </source>
</reference>
<reference key="26">
    <citation type="journal article" date="2015" name="Proteomics">
        <title>N-terminome analysis of the human mitochondrial proteome.</title>
        <authorList>
            <person name="Vaca Jacome A.S."/>
            <person name="Rabilloud T."/>
            <person name="Schaeffer-Reiss C."/>
            <person name="Rompais M."/>
            <person name="Ayoub D."/>
            <person name="Lane L."/>
            <person name="Bairoch A."/>
            <person name="Van Dorsselaer A."/>
            <person name="Carapito C."/>
        </authorList>
    </citation>
    <scope>IDENTIFICATION BY MASS SPECTROMETRY [LARGE SCALE ANALYSIS]</scope>
</reference>
<reference key="27">
    <citation type="journal article" date="2018" name="Mol. Cell">
        <title>High-Density Proximity Mapping Reveals the Subcellular Organization of mRNA-Associated Granules and Bodies.</title>
        <authorList>
            <person name="Youn J.Y."/>
            <person name="Dunham W.H."/>
            <person name="Hong S.J."/>
            <person name="Knight J.D.R."/>
            <person name="Bashkurov M."/>
            <person name="Chen G.I."/>
            <person name="Bagci H."/>
            <person name="Rathod B."/>
            <person name="MacLeod G."/>
            <person name="Eng S.W.M."/>
            <person name="Angers S."/>
            <person name="Morris Q."/>
            <person name="Fabian M."/>
            <person name="Cote J.F."/>
            <person name="Gingras A.C."/>
        </authorList>
    </citation>
    <scope>FUNCTION</scope>
    <scope>SUBCELLULAR LOCATION</scope>
</reference>
<reference key="28">
    <citation type="journal article" date="2020" name="Cell">
        <title>Competing protein-RNA interaction networks control multiphase intracellular organization.</title>
        <authorList>
            <person name="Sanders D.W."/>
            <person name="Kedersha N."/>
            <person name="Lee D.S.W."/>
            <person name="Strom A.R."/>
            <person name="Drake V."/>
            <person name="Riback J.A."/>
            <person name="Bracha D."/>
            <person name="Eeftens J.M."/>
            <person name="Iwanicki A."/>
            <person name="Wang A."/>
            <person name="Wei M.T."/>
            <person name="Whitney G."/>
            <person name="Lyons S.M."/>
            <person name="Anderson P."/>
            <person name="Jacobs W.M."/>
            <person name="Ivanov P."/>
            <person name="Brangwynne C.P."/>
        </authorList>
    </citation>
    <scope>INTERACTION WITH G3BP1</scope>
</reference>
<reference key="29">
    <citation type="journal article" date="2022" name="DNA Repair">
        <title>UBAP2/UBAP2L regulate UV-induced ubiquitylation of RNA polymerase II and are the human orthologues of yeast Def1.</title>
        <authorList>
            <person name="Herlihy A.E."/>
            <person name="Boeing S."/>
            <person name="Weems J.C."/>
            <person name="Walker J."/>
            <person name="Dirac-Svejstrup A.B."/>
            <person name="Lehner M.H."/>
            <person name="Conaway R.C."/>
            <person name="Conaway J.W."/>
            <person name="Svejstrup J.Q."/>
        </authorList>
    </citation>
    <scope>FUNCTION</scope>
    <scope>SUBCELLULAR LOCATION</scope>
</reference>
<reference key="30">
    <citation type="journal article" date="2022" name="Sci. Adv.">
        <title>De novo variants in genes regulating stress granule assembly associate with neurodevelopmental disorders.</title>
        <authorList>
            <person name="Jia X."/>
            <person name="Zhang S."/>
            <person name="Tan S."/>
            <person name="Du B."/>
            <person name="He M."/>
            <person name="Qin H."/>
            <person name="Chen J."/>
            <person name="Duan X."/>
            <person name="Luo J."/>
            <person name="Chen F."/>
            <person name="Ouyang L."/>
            <person name="Wang J."/>
            <person name="Chen G."/>
            <person name="Yu B."/>
            <person name="Zhang G."/>
            <person name="Zhang Z."/>
            <person name="Lyu Y."/>
            <person name="Huang Y."/>
            <person name="Jiao J."/>
            <person name="Chen J.Y.H."/>
            <person name="Swoboda K.J."/>
            <person name="Agolini E."/>
            <person name="Novelli A."/>
            <person name="Leoni C."/>
            <person name="Zampino G."/>
            <person name="Cappuccio G."/>
            <person name="Brunetti-Pierri N."/>
            <person name="Gerard B."/>
            <person name="Ginglinger E."/>
            <person name="Richer J."/>
            <person name="McMillan H."/>
            <person name="White-Brown A."/>
            <person name="Hoekzema K."/>
            <person name="Bernier R.A."/>
            <person name="Kurtz-Nelson E.C."/>
            <person name="Earl R.K."/>
            <person name="Meddens C."/>
            <person name="Alders M."/>
            <person name="Fuchs M."/>
            <person name="Caumes R."/>
            <person name="Brunelle P."/>
            <person name="Smol T."/>
            <person name="Kuehl R."/>
            <person name="Day-Salvatore D.L."/>
            <person name="Monaghan K.G."/>
            <person name="Morrow M.M."/>
            <person name="Eichler E.E."/>
            <person name="Hu Z."/>
            <person name="Yuan L."/>
            <person name="Tan J."/>
            <person name="Xia K."/>
            <person name="Shen Y."/>
            <person name="Guo H."/>
        </authorList>
    </citation>
    <scope>VARIANTS NEDLBF 30-GLN--ASN-1087 DEL; 124-ARG--ASN-1087 DEL; 188-GLY--ASN-1087 DEL; 572-GLN--ASN-1087 DEL; 616-GLN--ASN-1087 DEL AND 908-TYR--ASN-1087 DEL</scope>
    <scope>CHARACTERIZATION OF VARIANTS NEDLBF 30-GLN--ASN-1087 DEL AND 188-GLY--ASN-1087 DEL</scope>
    <scope>FUNCTION</scope>
    <scope>INVOLVEMENT IN NEDLBF</scope>
</reference>
<sequence length="1087" mass="114535">MMTSVGTNRARGNWEQPQNQNQTQHKQRPQATAEQIRLAQMISDHNDADFEEKVKQLIDITGKNQDECVIALHDCNGDVNRAINVLLEGNPDTHSWEMVGKKKGVSGQKDGGQTESNEEGKENRDRDRDYSRRRGGPPRRGRGASRGREFRGQENGLDGTKSGGPSGRGTERGRRGRGRGRGGSGRRGGRFSAQGMGTFNPADYAEPANTDDNYGNSSGNTWNNTGHFEPDDGTSAWRTATEEWGTEDWNEDLSETKIFTASNVSSVPLPAENVTITAGQRIDLAVLLGKTPSTMENDSSNLDPSQAPSLAQPLVFSNSKQTAISQPASGNTFSHHSMVSMLGKGFGDVGEAKGGSTTGSQFLEQFKTAQALAQLAAQHSQSGSTTTSSWDMGSTTQSPSLVQYDLKNPSDSAVHSPFTKRQAFTPSSTMMEVFLQEKSPAVATSTAAPPPPSSPLPSKSTSAPQMSPGSSDNQSSSPQPAQQKLKQQKKKASLTSKIPALAVEMPGSADISGLNLQFGALQFGSEPVLSDYESTPTTSASSSQAPSSLYTSTASESSSTISSNQSQESGYQSGPIQSTTYTSQNNAQGPLYEQRSTQTRRYPSSISSSPQKDLTQAKNGFSSVQATQLQTTQSVEGATGSAVKSDSPSTSSIPPLNETVSAASLLTTTNQHSSSLGGLSHSEEIPNTTTTQHSSTLSTQQNTLSSSTSSGRTSTSTLLHTSVESEANLHSSSSTFSTTSSTVSAPPPVVSVSSSLNSGSSLGLSLGSNSTVTASTRSSVATTSGKAPPNLPPGVPPLLPNPYIMAPGLLHAYPPQVYGYDDLQMLQTRFPLDYYSIPFPTPTTPLTGRDGSLASNPYSGDLTKFGRGDASSPAPATTLAQPQQNQTQTHHTTQQTFLNPALPPGYSYTSLPYYTGVPGLPSTFQYGPAVFPVAPTSSKQHGVNVSVNASATPFQQPSGYGSHGYNTGVSVTSSNTGVPDISGSVYSKTQQSFEKQGFHSGTPAASFNLPSALGSGGPINPATAAAYPPAPFMHILTPHQQPHSQILHHHLQQDGQTGSGQRSQTSSIPQKPQTNKSAYNSYSWGAN</sequence>
<name>UBP2L_HUMAN</name>
<protein>
    <recommendedName>
        <fullName evidence="14">Ubiquitin-associated protein 2-like</fullName>
    </recommendedName>
    <alternativeName>
        <fullName>Protein NICE-4</fullName>
    </alternativeName>
    <alternativeName>
        <fullName evidence="12">RNA polymerase II degradation factor UBAP2L</fullName>
    </alternativeName>
</protein>
<organism>
    <name type="scientific">Homo sapiens</name>
    <name type="common">Human</name>
    <dbReference type="NCBI Taxonomy" id="9606"/>
    <lineage>
        <taxon>Eukaryota</taxon>
        <taxon>Metazoa</taxon>
        <taxon>Chordata</taxon>
        <taxon>Craniata</taxon>
        <taxon>Vertebrata</taxon>
        <taxon>Euteleostomi</taxon>
        <taxon>Mammalia</taxon>
        <taxon>Eutheria</taxon>
        <taxon>Euarchontoglires</taxon>
        <taxon>Primates</taxon>
        <taxon>Haplorrhini</taxon>
        <taxon>Catarrhini</taxon>
        <taxon>Hominidae</taxon>
        <taxon>Homo</taxon>
    </lineage>
</organism>
<feature type="chain" id="PRO_0000211020" description="Ubiquitin-associated protein 2-like">
    <location>
        <begin position="1"/>
        <end position="1087"/>
    </location>
</feature>
<feature type="domain" description="UBA" evidence="2">
    <location>
        <begin position="49"/>
        <end position="89"/>
    </location>
</feature>
<feature type="region of interest" description="Disordered" evidence="3">
    <location>
        <begin position="1"/>
        <end position="33"/>
    </location>
</feature>
<feature type="region of interest" description="Disordered" evidence="3">
    <location>
        <begin position="92"/>
        <end position="234"/>
    </location>
</feature>
<feature type="region of interest" description="Disordered" evidence="3">
    <location>
        <begin position="377"/>
        <end position="420"/>
    </location>
</feature>
<feature type="region of interest" description="Disordered" evidence="3">
    <location>
        <begin position="440"/>
        <end position="493"/>
    </location>
</feature>
<feature type="region of interest" description="Disordered" evidence="3">
    <location>
        <begin position="530"/>
        <end position="656"/>
    </location>
</feature>
<feature type="region of interest" description="Disordered" evidence="3">
    <location>
        <begin position="669"/>
        <end position="794"/>
    </location>
</feature>
<feature type="region of interest" description="Disordered" evidence="3">
    <location>
        <begin position="865"/>
        <end position="901"/>
    </location>
</feature>
<feature type="region of interest" description="Disordered" evidence="3">
    <location>
        <begin position="1040"/>
        <end position="1087"/>
    </location>
</feature>
<feature type="compositionally biased region" description="Basic and acidic residues" evidence="3">
    <location>
        <begin position="118"/>
        <end position="132"/>
    </location>
</feature>
<feature type="compositionally biased region" description="Basic residues" evidence="3">
    <location>
        <begin position="133"/>
        <end position="145"/>
    </location>
</feature>
<feature type="compositionally biased region" description="Low complexity" evidence="3">
    <location>
        <begin position="213"/>
        <end position="226"/>
    </location>
</feature>
<feature type="compositionally biased region" description="Low complexity" evidence="3">
    <location>
        <begin position="377"/>
        <end position="389"/>
    </location>
</feature>
<feature type="compositionally biased region" description="Polar residues" evidence="3">
    <location>
        <begin position="390"/>
        <end position="401"/>
    </location>
</feature>
<feature type="compositionally biased region" description="Low complexity" evidence="3">
    <location>
        <begin position="474"/>
        <end position="485"/>
    </location>
</feature>
<feature type="compositionally biased region" description="Low complexity" evidence="3">
    <location>
        <begin position="534"/>
        <end position="569"/>
    </location>
</feature>
<feature type="compositionally biased region" description="Polar residues" evidence="3">
    <location>
        <begin position="570"/>
        <end position="656"/>
    </location>
</feature>
<feature type="compositionally biased region" description="Low complexity" evidence="3">
    <location>
        <begin position="688"/>
        <end position="784"/>
    </location>
</feature>
<feature type="compositionally biased region" description="Low complexity" evidence="3">
    <location>
        <begin position="873"/>
        <end position="896"/>
    </location>
</feature>
<feature type="compositionally biased region" description="Low complexity" evidence="3">
    <location>
        <begin position="1053"/>
        <end position="1067"/>
    </location>
</feature>
<feature type="compositionally biased region" description="Polar residues" evidence="3">
    <location>
        <begin position="1068"/>
        <end position="1087"/>
    </location>
</feature>
<feature type="modified residue" description="N-acetylmethionine" evidence="23 28">
    <location>
        <position position="1"/>
    </location>
</feature>
<feature type="modified residue" description="Asymmetric dimethylarginine" evidence="30">
    <location>
        <position position="187"/>
    </location>
</feature>
<feature type="modified residue" description="Asymmetric dimethylarginine" evidence="30">
    <location>
        <position position="190"/>
    </location>
</feature>
<feature type="modified residue" description="Phosphoserine" evidence="29">
    <location>
        <position position="356"/>
    </location>
</feature>
<feature type="modified residue" description="Phosphoserine" evidence="29">
    <location>
        <position position="360"/>
    </location>
</feature>
<feature type="modified residue" description="Phosphoserine" evidence="29">
    <location>
        <position position="410"/>
    </location>
</feature>
<feature type="modified residue" description="Phosphoserine" evidence="17 19 20 21 26 27 29">
    <location>
        <position position="416"/>
    </location>
</feature>
<feature type="modified residue" description="Phosphothreonine" evidence="26">
    <location>
        <position position="425"/>
    </location>
</feature>
<feature type="modified residue" description="Phosphoserine" evidence="20 21 26">
    <location>
        <position position="439"/>
    </location>
</feature>
<feature type="modified residue" description="Phosphoserine" evidence="18 20 25 26 29">
    <location>
        <position position="454"/>
    </location>
</feature>
<feature type="modified residue" description="Phosphoserine" evidence="20 21 22 27">
    <location>
        <position position="467"/>
    </location>
</feature>
<feature type="modified residue" description="Phosphoserine" evidence="25">
    <location>
        <position position="470"/>
    </location>
</feature>
<feature type="modified residue" description="Phosphoserine" evidence="20">
    <location>
        <position position="471"/>
    </location>
</feature>
<feature type="modified residue" description="Phosphoserine" evidence="20 25 27 29">
    <location>
        <position position="477"/>
    </location>
</feature>
<feature type="modified residue" description="Phosphoserine" evidence="29">
    <location>
        <position position="604"/>
    </location>
</feature>
<feature type="modified residue" description="Phosphoserine" evidence="20 29">
    <location>
        <position position="605"/>
    </location>
</feature>
<feature type="modified residue" description="Phosphoserine" evidence="20 29">
    <location>
        <position position="608"/>
    </location>
</feature>
<feature type="modified residue" description="Phosphoserine" evidence="20 26 27 29 31">
    <location>
        <position position="609"/>
    </location>
</feature>
<feature type="modified residue" description="Phosphoserine" evidence="20 29">
    <location>
        <position position="852"/>
    </location>
</feature>
<feature type="modified residue" description="Phosphoserine" evidence="20 25 29">
    <location>
        <position position="859"/>
    </location>
</feature>
<feature type="splice variant" id="VSP_038235" description="In isoform 4." evidence="11">
    <original>GASRGREF</original>
    <variation>V</variation>
    <location>
        <begin position="143"/>
        <end position="150"/>
    </location>
</feature>
<feature type="splice variant" id="VSP_019417" description="In isoform 2 and isoform 4." evidence="11 13">
    <original>VSVTSSNTGVPDISGSVYSKTQQSFEKQGFHSGTPAASFNLPSALGSGGPINPATAAAYPPAPFMHILTPHQQPHSQILHHHLQQDGQTGSGQRSQTSSIPQKPQTNKSAYNSYSWGAN</original>
    <variation>RKYPPPYKHFWTAES</variation>
    <location>
        <begin position="969"/>
        <end position="1087"/>
    </location>
</feature>
<feature type="splice variant" id="VSP_042167" description="In isoform 5." evidence="10">
    <original>G</original>
    <variation>GQLPYLQMILCCQRQQEE</variation>
    <location>
        <position position="1055"/>
    </location>
</feature>
<feature type="splice variant" id="VSP_021728" description="In isoform 3." evidence="10">
    <original>TGSGQRSQTSSIPQKPQTNKSAYNSYSWGAN</original>
    <variation>DILNFVDDQLGE</variation>
    <location>
        <begin position="1057"/>
        <end position="1087"/>
    </location>
</feature>
<feature type="sequence variant" id="VAR_088964" description="In NEDLBF; pathogenic; decreased protein expression in patients cells; patient cells contain a novel protein which lacks the normal N-terminus and is produced by translation from a start codon downstream the nonsense variant; decreased function in stress granule formation shown by rescue assays in transfected UBAP2L-deficient cells." evidence="9">
    <location>
        <begin position="30"/>
        <end position="1087"/>
    </location>
</feature>
<feature type="sequence variant" id="VAR_088965" description="In NEDLBF; pathogenic." evidence="9">
    <location>
        <begin position="124"/>
        <end position="1087"/>
    </location>
</feature>
<feature type="sequence variant" id="VAR_088966" description="In NEDLBF; pathogenic; decreased function in stress granule formation shown by rescue assays in transfected UBAP2L-deficient cells." evidence="9">
    <location>
        <begin position="188"/>
        <end position="1087"/>
    </location>
</feature>
<feature type="sequence variant" id="VAR_026829" description="In dbSNP:rs17849745.">
    <original>Q</original>
    <variation>H</variation>
    <location>
        <position position="482"/>
    </location>
</feature>
<feature type="sequence variant" id="VAR_088967" description="In NEDLBF; pathogenic." evidence="9">
    <location>
        <begin position="572"/>
        <end position="1087"/>
    </location>
</feature>
<feature type="sequence variant" id="VAR_088968" description="In NEDLBF; pathogenic." evidence="9">
    <location>
        <begin position="616"/>
        <end position="1087"/>
    </location>
</feature>
<feature type="sequence variant" id="VAR_088969" description="In NEDLBF; pathogenic." evidence="9">
    <location>
        <begin position="908"/>
        <end position="1087"/>
    </location>
</feature>
<feature type="sequence conflict" description="In Ref. 2; BAG64560." evidence="14" ref="2">
    <original>P</original>
    <variation>S</variation>
    <location>
        <position position="91"/>
    </location>
</feature>
<feature type="modified residue" description="Omega-N-methylarginine" evidence="30">
    <location sequence="Q14157-1">
        <position position="969"/>
    </location>
</feature>
<feature type="modified residue" description="N6-acetyllysine" evidence="24">
    <location sequence="Q14157-1">
        <position position="976"/>
    </location>
</feature>
<feature type="modified residue" description="Omega-N-methylarginine" evidence="30">
    <location sequence="Q14157-4">
        <position position="962"/>
    </location>
</feature>
<feature type="modified residue" description="N6-acetyllysine" evidence="24">
    <location sequence="Q14157-4">
        <position position="969"/>
    </location>
</feature>
<dbReference type="EMBL" id="D63478">
    <property type="protein sequence ID" value="BAA09765.1"/>
    <property type="molecule type" value="mRNA"/>
</dbReference>
<dbReference type="EMBL" id="AK303533">
    <property type="protein sequence ID" value="BAG64560.1"/>
    <property type="molecule type" value="mRNA"/>
</dbReference>
<dbReference type="EMBL" id="AL590431">
    <property type="status" value="NOT_ANNOTATED_CDS"/>
    <property type="molecule type" value="Genomic_DNA"/>
</dbReference>
<dbReference type="EMBL" id="BC003170">
    <property type="protein sequence ID" value="AAH03170.1"/>
    <property type="molecule type" value="mRNA"/>
</dbReference>
<dbReference type="EMBL" id="AJ243668">
    <property type="protein sequence ID" value="CAB65099.1"/>
    <property type="molecule type" value="mRNA"/>
</dbReference>
<dbReference type="EMBL" id="AJ243670">
    <property type="protein sequence ID" value="CAB65101.2"/>
    <property type="molecule type" value="mRNA"/>
</dbReference>
<dbReference type="EMBL" id="AJ243669">
    <property type="protein sequence ID" value="CAB65100.2"/>
    <property type="status" value="ALT_FRAME"/>
    <property type="molecule type" value="mRNA"/>
</dbReference>
<dbReference type="CCDS" id="CCDS1063.1">
    <molecule id="Q14157-2"/>
</dbReference>
<dbReference type="CCDS" id="CCDS44229.1">
    <molecule id="Q14157-1"/>
</dbReference>
<dbReference type="CCDS" id="CCDS72925.1">
    <molecule id="Q14157-4"/>
</dbReference>
<dbReference type="RefSeq" id="NP_001120792.1">
    <molecule id="Q14157-1"/>
    <property type="nucleotide sequence ID" value="NM_001127320.3"/>
</dbReference>
<dbReference type="RefSeq" id="NP_001274744.1">
    <molecule id="Q14157-4"/>
    <property type="nucleotide sequence ID" value="NM_001287815.1"/>
</dbReference>
<dbReference type="RefSeq" id="NP_001274745.1">
    <property type="nucleotide sequence ID" value="NM_001287816.1"/>
</dbReference>
<dbReference type="RefSeq" id="NP_001362543.1">
    <molecule id="Q14157-5"/>
    <property type="nucleotide sequence ID" value="NM_001375614.1"/>
</dbReference>
<dbReference type="RefSeq" id="NP_001362547.1">
    <molecule id="Q14157-2"/>
    <property type="nucleotide sequence ID" value="NM_001375618.1"/>
</dbReference>
<dbReference type="RefSeq" id="NP_001362548.1">
    <molecule id="Q14157-2"/>
    <property type="nucleotide sequence ID" value="NM_001375619.1"/>
</dbReference>
<dbReference type="RefSeq" id="NP_001362555.1">
    <molecule id="Q14157-3"/>
    <property type="nucleotide sequence ID" value="NM_001375626.1"/>
</dbReference>
<dbReference type="RefSeq" id="NP_001362556.1">
    <molecule id="Q14157-3"/>
    <property type="nucleotide sequence ID" value="NM_001375627.1"/>
</dbReference>
<dbReference type="RefSeq" id="NP_001362558.1">
    <molecule id="Q14157-1"/>
    <property type="nucleotide sequence ID" value="NM_001375629.1"/>
</dbReference>
<dbReference type="RefSeq" id="NP_001362559.1">
    <molecule id="Q14157-1"/>
    <property type="nucleotide sequence ID" value="NM_001375630.1"/>
</dbReference>
<dbReference type="RefSeq" id="NP_001362560.1">
    <molecule id="Q14157-1"/>
    <property type="nucleotide sequence ID" value="NM_001375631.1"/>
</dbReference>
<dbReference type="RefSeq" id="NP_055662.3">
    <molecule id="Q14157-2"/>
    <property type="nucleotide sequence ID" value="NM_014847.3"/>
</dbReference>
<dbReference type="RefSeq" id="XP_005245731.1">
    <property type="nucleotide sequence ID" value="XM_005245674.1"/>
</dbReference>
<dbReference type="RefSeq" id="XP_011508518.1">
    <property type="nucleotide sequence ID" value="XM_011510216.1"/>
</dbReference>
<dbReference type="RefSeq" id="XP_016858467.1">
    <property type="nucleotide sequence ID" value="XM_017002978.1"/>
</dbReference>
<dbReference type="RefSeq" id="XP_016858468.1">
    <property type="nucleotide sequence ID" value="XM_017002979.1"/>
</dbReference>
<dbReference type="RefSeq" id="XP_016858475.1">
    <property type="nucleotide sequence ID" value="XM_017002986.1"/>
</dbReference>
<dbReference type="RefSeq" id="XP_016858476.1">
    <property type="nucleotide sequence ID" value="XM_017002987.1"/>
</dbReference>
<dbReference type="RefSeq" id="XP_016858478.1">
    <property type="nucleotide sequence ID" value="XM_017002989.1"/>
</dbReference>
<dbReference type="RefSeq" id="XP_016858479.1">
    <property type="nucleotide sequence ID" value="XM_017002990.1"/>
</dbReference>
<dbReference type="RefSeq" id="XP_047291843.1">
    <molecule id="Q14157-3"/>
    <property type="nucleotide sequence ID" value="XM_047435887.1"/>
</dbReference>
<dbReference type="RefSeq" id="XP_054195885.1">
    <molecule id="Q14157-3"/>
    <property type="nucleotide sequence ID" value="XM_054339910.1"/>
</dbReference>
<dbReference type="SMR" id="Q14157"/>
<dbReference type="BioGRID" id="115227">
    <property type="interactions" value="315"/>
</dbReference>
<dbReference type="CORUM" id="Q14157"/>
<dbReference type="FunCoup" id="Q14157">
    <property type="interactions" value="5148"/>
</dbReference>
<dbReference type="IntAct" id="Q14157">
    <property type="interactions" value="83"/>
</dbReference>
<dbReference type="MINT" id="Q14157"/>
<dbReference type="STRING" id="9606.ENSP00000389445"/>
<dbReference type="ChEMBL" id="CHEMBL4295819"/>
<dbReference type="GlyConnect" id="2895">
    <property type="glycosylation" value="1 O-GlcNAc glycan (2 sites)"/>
</dbReference>
<dbReference type="GlyCosmos" id="Q14157">
    <property type="glycosylation" value="88 sites, 2 glycans"/>
</dbReference>
<dbReference type="GlyGen" id="Q14157">
    <property type="glycosylation" value="104 sites, 3 N-linked glycans (2 sites), 3 O-linked glycans (101 sites)"/>
</dbReference>
<dbReference type="iPTMnet" id="Q14157"/>
<dbReference type="MetOSite" id="Q14157"/>
<dbReference type="PhosphoSitePlus" id="Q14157"/>
<dbReference type="BioMuta" id="UBAP2L"/>
<dbReference type="DMDM" id="109940042"/>
<dbReference type="CPTAC" id="CPTAC-599"/>
<dbReference type="CPTAC" id="CPTAC-600"/>
<dbReference type="jPOST" id="Q14157"/>
<dbReference type="MassIVE" id="Q14157"/>
<dbReference type="PaxDb" id="9606-ENSP00000389445"/>
<dbReference type="PeptideAtlas" id="Q14157"/>
<dbReference type="ProteomicsDB" id="59867">
    <molecule id="Q14157-2"/>
</dbReference>
<dbReference type="ProteomicsDB" id="59868">
    <molecule id="Q14157-1"/>
</dbReference>
<dbReference type="ProteomicsDB" id="59869">
    <molecule id="Q14157-3"/>
</dbReference>
<dbReference type="ProteomicsDB" id="59870">
    <molecule id="Q14157-4"/>
</dbReference>
<dbReference type="ProteomicsDB" id="59871">
    <molecule id="Q14157-5"/>
</dbReference>
<dbReference type="Pumba" id="Q14157"/>
<dbReference type="Antibodypedia" id="34148">
    <property type="antibodies" value="198 antibodies from 26 providers"/>
</dbReference>
<dbReference type="DNASU" id="9898"/>
<dbReference type="Ensembl" id="ENST00000343815.10">
    <molecule id="Q14157-1"/>
    <property type="protein sequence ID" value="ENSP00000345308.6"/>
    <property type="gene ID" value="ENSG00000143569.20"/>
</dbReference>
<dbReference type="Ensembl" id="ENST00000361546.6">
    <molecule id="Q14157-2"/>
    <property type="protein sequence ID" value="ENSP00000355343.2"/>
    <property type="gene ID" value="ENSG00000143569.20"/>
</dbReference>
<dbReference type="Ensembl" id="ENST00000428931.6">
    <molecule id="Q14157-2"/>
    <property type="protein sequence ID" value="ENSP00000389445.1"/>
    <property type="gene ID" value="ENSG00000143569.20"/>
</dbReference>
<dbReference type="Ensembl" id="ENST00000613315.4">
    <molecule id="Q14157-4"/>
    <property type="protein sequence ID" value="ENSP00000478447.1"/>
    <property type="gene ID" value="ENSG00000143569.20"/>
</dbReference>
<dbReference type="GeneID" id="9898"/>
<dbReference type="KEGG" id="hsa:9898"/>
<dbReference type="MANE-Select" id="ENST00000428931.6">
    <property type="protein sequence ID" value="ENSP00000389445.1"/>
    <property type="RefSeq nucleotide sequence ID" value="NM_014847.4"/>
    <property type="RefSeq protein sequence ID" value="NP_055662.3"/>
</dbReference>
<dbReference type="UCSC" id="uc001fep.5">
    <molecule id="Q14157-2"/>
    <property type="organism name" value="human"/>
</dbReference>
<dbReference type="AGR" id="HGNC:29877"/>
<dbReference type="CTD" id="9898"/>
<dbReference type="DisGeNET" id="9898"/>
<dbReference type="GeneCards" id="UBAP2L"/>
<dbReference type="HGNC" id="HGNC:29877">
    <property type="gene designation" value="UBAP2L"/>
</dbReference>
<dbReference type="HPA" id="ENSG00000143569">
    <property type="expression patterns" value="Low tissue specificity"/>
</dbReference>
<dbReference type="MalaCards" id="UBAP2L"/>
<dbReference type="MIM" id="616472">
    <property type="type" value="gene"/>
</dbReference>
<dbReference type="MIM" id="620494">
    <property type="type" value="phenotype"/>
</dbReference>
<dbReference type="neXtProt" id="NX_Q14157"/>
<dbReference type="OpenTargets" id="ENSG00000143569"/>
<dbReference type="PharmGKB" id="PA134883839"/>
<dbReference type="VEuPathDB" id="HostDB:ENSG00000143569"/>
<dbReference type="eggNOG" id="ENOG502QPRH">
    <property type="taxonomic scope" value="Eukaryota"/>
</dbReference>
<dbReference type="GeneTree" id="ENSGT00390000003453"/>
<dbReference type="HOGENOM" id="CLU_009850_0_0_1"/>
<dbReference type="InParanoid" id="Q14157"/>
<dbReference type="OMA" id="TYSSGIM"/>
<dbReference type="OrthoDB" id="5918007at2759"/>
<dbReference type="PAN-GO" id="Q14157">
    <property type="GO annotations" value="3 GO annotations based on evolutionary models"/>
</dbReference>
<dbReference type="PhylomeDB" id="Q14157"/>
<dbReference type="TreeFam" id="TF328468"/>
<dbReference type="PathwayCommons" id="Q14157"/>
<dbReference type="SignaLink" id="Q14157"/>
<dbReference type="SIGNOR" id="Q14157"/>
<dbReference type="BioGRID-ORCS" id="9898">
    <property type="hits" value="97 hits in 1171 CRISPR screens"/>
</dbReference>
<dbReference type="CD-CODE" id="1A18FFC4">
    <property type="entry name" value="Paraspeckle"/>
</dbReference>
<dbReference type="CD-CODE" id="232F8A39">
    <property type="entry name" value="P-body"/>
</dbReference>
<dbReference type="CD-CODE" id="DEE660B4">
    <property type="entry name" value="Stress granule"/>
</dbReference>
<dbReference type="ChiTaRS" id="UBAP2L">
    <property type="organism name" value="human"/>
</dbReference>
<dbReference type="GeneWiki" id="UBAP2L"/>
<dbReference type="GenomeRNAi" id="9898"/>
<dbReference type="Pharos" id="Q14157">
    <property type="development level" value="Tbio"/>
</dbReference>
<dbReference type="PRO" id="PR:Q14157"/>
<dbReference type="Proteomes" id="UP000005640">
    <property type="component" value="Chromosome 1"/>
</dbReference>
<dbReference type="RNAct" id="Q14157">
    <property type="molecule type" value="protein"/>
</dbReference>
<dbReference type="Bgee" id="ENSG00000143569">
    <property type="expression patterns" value="Expressed in sural nerve and 210 other cell types or tissues"/>
</dbReference>
<dbReference type="ExpressionAtlas" id="Q14157">
    <property type="expression patterns" value="baseline and differential"/>
</dbReference>
<dbReference type="GO" id="GO:0005694">
    <property type="term" value="C:chromosome"/>
    <property type="evidence" value="ECO:0007669"/>
    <property type="project" value="UniProtKB-SubCell"/>
</dbReference>
<dbReference type="GO" id="GO:0005737">
    <property type="term" value="C:cytoplasm"/>
    <property type="evidence" value="ECO:0000318"/>
    <property type="project" value="GO_Central"/>
</dbReference>
<dbReference type="GO" id="GO:0010494">
    <property type="term" value="C:cytoplasmic stress granule"/>
    <property type="evidence" value="ECO:0007669"/>
    <property type="project" value="UniProtKB-SubCell"/>
</dbReference>
<dbReference type="GO" id="GO:0005634">
    <property type="term" value="C:nucleus"/>
    <property type="evidence" value="ECO:0000318"/>
    <property type="project" value="GO_Central"/>
</dbReference>
<dbReference type="GO" id="GO:0031519">
    <property type="term" value="C:PcG protein complex"/>
    <property type="evidence" value="ECO:0000314"/>
    <property type="project" value="MGI"/>
</dbReference>
<dbReference type="GO" id="GO:0003723">
    <property type="term" value="F:RNA binding"/>
    <property type="evidence" value="ECO:0007005"/>
    <property type="project" value="UniProtKB"/>
</dbReference>
<dbReference type="GO" id="GO:0007339">
    <property type="term" value="P:binding of sperm to zona pellucida"/>
    <property type="evidence" value="ECO:0000315"/>
    <property type="project" value="UniProtKB"/>
</dbReference>
<dbReference type="GO" id="GO:0061484">
    <property type="term" value="P:hematopoietic stem cell homeostasis"/>
    <property type="evidence" value="ECO:0000316"/>
    <property type="project" value="MGI"/>
</dbReference>
<dbReference type="GO" id="GO:0062029">
    <property type="term" value="P:positive regulation of stress granule assembly"/>
    <property type="evidence" value="ECO:0000314"/>
    <property type="project" value="UniProtKB"/>
</dbReference>
<dbReference type="GO" id="GO:0034063">
    <property type="term" value="P:stress granule assembly"/>
    <property type="evidence" value="ECO:0000315"/>
    <property type="project" value="UniProtKB"/>
</dbReference>
<dbReference type="CDD" id="cd14277">
    <property type="entry name" value="UBA_UBP2_like"/>
    <property type="match status" value="1"/>
</dbReference>
<dbReference type="FunFam" id="1.10.8.10:FF:000004">
    <property type="entry name" value="ubiquitin-associated protein 2-like isoform X1"/>
    <property type="match status" value="1"/>
</dbReference>
<dbReference type="Gene3D" id="1.10.8.10">
    <property type="entry name" value="DNA helicase RuvA subunit, C-terminal domain"/>
    <property type="match status" value="1"/>
</dbReference>
<dbReference type="InterPro" id="IPR051833">
    <property type="entry name" value="TC-DDR_regulator"/>
</dbReference>
<dbReference type="InterPro" id="IPR015940">
    <property type="entry name" value="UBA"/>
</dbReference>
<dbReference type="InterPro" id="IPR009060">
    <property type="entry name" value="UBA-like_sf"/>
</dbReference>
<dbReference type="InterPro" id="IPR022166">
    <property type="entry name" value="UBAP2/Lig"/>
</dbReference>
<dbReference type="PANTHER" id="PTHR16308">
    <property type="entry name" value="UBIQUITIN ASSOCIATED PROTEIN 2-LIKE/LINGERER"/>
    <property type="match status" value="1"/>
</dbReference>
<dbReference type="PANTHER" id="PTHR16308:SF18">
    <property type="entry name" value="UBIQUITIN-ASSOCIATED PROTEIN 2-LIKE"/>
    <property type="match status" value="1"/>
</dbReference>
<dbReference type="Pfam" id="PF12478">
    <property type="entry name" value="UBAP2-Lig"/>
    <property type="match status" value="1"/>
</dbReference>
<dbReference type="SMART" id="SM00165">
    <property type="entry name" value="UBA"/>
    <property type="match status" value="1"/>
</dbReference>
<dbReference type="SUPFAM" id="SSF46934">
    <property type="entry name" value="UBA-like"/>
    <property type="match status" value="1"/>
</dbReference>
<dbReference type="PROSITE" id="PS50030">
    <property type="entry name" value="UBA"/>
    <property type="match status" value="1"/>
</dbReference>
<accession>Q14157</accession>
<accession>B4E0U8</accession>
<accession>Q5VU75</accession>
<accession>Q5VU76</accession>
<accession>Q9BTU3</accession>
<accession>Q9UGL2</accession>
<accession>Q9UGL3</accession>
<accession>Q9UGL4</accession>
<accession>Q9UGL5</accession>
<gene>
    <name evidence="16" type="primary">UBAP2L</name>
    <name type="synonym">KIAA0144</name>
    <name type="synonym">NICE4</name>
</gene>